<evidence type="ECO:0000250" key="1">
    <source>
        <dbReference type="UniProtKB" id="Q8NB78"/>
    </source>
</evidence>
<evidence type="ECO:0000255" key="2"/>
<evidence type="ECO:0000255" key="3">
    <source>
        <dbReference type="PROSITE-ProRule" id="PRU00247"/>
    </source>
</evidence>
<evidence type="ECO:0000255" key="4">
    <source>
        <dbReference type="PROSITE-ProRule" id="PRU00454"/>
    </source>
</evidence>
<evidence type="ECO:0000256" key="5">
    <source>
        <dbReference type="SAM" id="MobiDB-lite"/>
    </source>
</evidence>
<evidence type="ECO:0000269" key="6">
    <source>
    </source>
</evidence>
<evidence type="ECO:0000269" key="7">
    <source>
    </source>
</evidence>
<evidence type="ECO:0000303" key="8">
    <source>
    </source>
</evidence>
<evidence type="ECO:0000305" key="9"/>
<evidence type="ECO:0000312" key="10">
    <source>
        <dbReference type="MGI" id="MGI:2145261"/>
    </source>
</evidence>
<evidence type="ECO:0007744" key="11">
    <source>
    </source>
</evidence>
<dbReference type="EC" id="1.14.99.66" evidence="1"/>
<dbReference type="EMBL" id="AK028553">
    <property type="protein sequence ID" value="BAC26005.1"/>
    <property type="status" value="ALT_INIT"/>
    <property type="molecule type" value="mRNA"/>
</dbReference>
<dbReference type="EMBL" id="AK078920">
    <property type="protein sequence ID" value="BAC37460.1"/>
    <property type="status" value="ALT_FRAME"/>
    <property type="molecule type" value="mRNA"/>
</dbReference>
<dbReference type="EMBL" id="BC023917">
    <property type="protein sequence ID" value="AAH23917.1"/>
    <property type="molecule type" value="mRNA"/>
</dbReference>
<dbReference type="CCDS" id="CCDS26489.1">
    <molecule id="Q8CIG3-1"/>
</dbReference>
<dbReference type="RefSeq" id="NP_758466.1">
    <molecule id="Q8CIG3-1"/>
    <property type="nucleotide sequence ID" value="NM_172262.4"/>
</dbReference>
<dbReference type="SMR" id="Q8CIG3"/>
<dbReference type="BioGRID" id="230002">
    <property type="interactions" value="2"/>
</dbReference>
<dbReference type="DIP" id="DIP-59111N"/>
<dbReference type="FunCoup" id="Q8CIG3">
    <property type="interactions" value="1835"/>
</dbReference>
<dbReference type="STRING" id="10090.ENSMUSP00000038373"/>
<dbReference type="BindingDB" id="Q8CIG3"/>
<dbReference type="ChEMBL" id="CHEMBL4879491"/>
<dbReference type="iPTMnet" id="Q8CIG3"/>
<dbReference type="PhosphoSitePlus" id="Q8CIG3"/>
<dbReference type="jPOST" id="Q8CIG3"/>
<dbReference type="PaxDb" id="10090-ENSMUSP00000038373"/>
<dbReference type="PeptideAtlas" id="Q8CIG3"/>
<dbReference type="ProteomicsDB" id="263515">
    <molecule id="Q8CIG3-1"/>
</dbReference>
<dbReference type="ProteomicsDB" id="263516">
    <molecule id="Q8CIG3-2"/>
</dbReference>
<dbReference type="ProteomicsDB" id="263517">
    <molecule id="Q8CIG3-3"/>
</dbReference>
<dbReference type="Pumba" id="Q8CIG3"/>
<dbReference type="Antibodypedia" id="25190">
    <property type="antibodies" value="154 antibodies from 26 providers"/>
</dbReference>
<dbReference type="DNASU" id="218214"/>
<dbReference type="Ensembl" id="ENSMUST00000037025.16">
    <molecule id="Q8CIG3-1"/>
    <property type="protein sequence ID" value="ENSMUSP00000038373.9"/>
    <property type="gene ID" value="ENSMUSG00000038080.18"/>
</dbReference>
<dbReference type="GeneID" id="218214"/>
<dbReference type="KEGG" id="mmu:218214"/>
<dbReference type="UCSC" id="uc007qht.3">
    <molecule id="Q8CIG3-1"/>
    <property type="organism name" value="mouse"/>
</dbReference>
<dbReference type="UCSC" id="uc007qhu.3">
    <molecule id="Q8CIG3-2"/>
    <property type="organism name" value="mouse"/>
</dbReference>
<dbReference type="UCSC" id="uc011yyy.2">
    <molecule id="Q8CIG3-3"/>
    <property type="organism name" value="mouse"/>
</dbReference>
<dbReference type="AGR" id="MGI:2145261"/>
<dbReference type="CTD" id="221656"/>
<dbReference type="MGI" id="MGI:2145261">
    <property type="gene designation" value="Kdm1b"/>
</dbReference>
<dbReference type="VEuPathDB" id="HostDB:ENSMUSG00000038080"/>
<dbReference type="eggNOG" id="KOG0029">
    <property type="taxonomic scope" value="Eukaryota"/>
</dbReference>
<dbReference type="GeneTree" id="ENSGT00940000157751"/>
<dbReference type="HOGENOM" id="CLU_007885_0_0_1"/>
<dbReference type="InParanoid" id="Q8CIG3"/>
<dbReference type="OMA" id="PYVFWGE"/>
<dbReference type="OrthoDB" id="2219495at2759"/>
<dbReference type="PhylomeDB" id="Q8CIG3"/>
<dbReference type="TreeFam" id="TF352593"/>
<dbReference type="BRENDA" id="1.14.99.66">
    <property type="organism ID" value="3474"/>
</dbReference>
<dbReference type="Reactome" id="R-MMU-3214842">
    <property type="pathway name" value="HDMs demethylate histones"/>
</dbReference>
<dbReference type="Reactome" id="R-MMU-5689603">
    <property type="pathway name" value="UCH proteinases"/>
</dbReference>
<dbReference type="BioGRID-ORCS" id="218214">
    <property type="hits" value="7 hits in 80 CRISPR screens"/>
</dbReference>
<dbReference type="ChiTaRS" id="Kdm1b">
    <property type="organism name" value="mouse"/>
</dbReference>
<dbReference type="PRO" id="PR:Q8CIG3"/>
<dbReference type="Proteomes" id="UP000000589">
    <property type="component" value="Chromosome 13"/>
</dbReference>
<dbReference type="RNAct" id="Q8CIG3">
    <property type="molecule type" value="protein"/>
</dbReference>
<dbReference type="Bgee" id="ENSMUSG00000038080">
    <property type="expression patterns" value="Expressed in primary oocyte and 242 other cell types or tissues"/>
</dbReference>
<dbReference type="ExpressionAtlas" id="Q8CIG3">
    <property type="expression patterns" value="baseline and differential"/>
</dbReference>
<dbReference type="GO" id="GO:0005654">
    <property type="term" value="C:nucleoplasm"/>
    <property type="evidence" value="ECO:0007669"/>
    <property type="project" value="Ensembl"/>
</dbReference>
<dbReference type="GO" id="GO:0000786">
    <property type="term" value="C:nucleosome"/>
    <property type="evidence" value="ECO:0007669"/>
    <property type="project" value="Ensembl"/>
</dbReference>
<dbReference type="GO" id="GO:0005634">
    <property type="term" value="C:nucleus"/>
    <property type="evidence" value="ECO:0000314"/>
    <property type="project" value="UniProtKB"/>
</dbReference>
<dbReference type="GO" id="GO:0071949">
    <property type="term" value="F:FAD binding"/>
    <property type="evidence" value="ECO:0000250"/>
    <property type="project" value="UniProtKB"/>
</dbReference>
<dbReference type="GO" id="GO:0140682">
    <property type="term" value="F:FAD-dependent H3K4me/H3K4me3 demethylase activity"/>
    <property type="evidence" value="ECO:0000314"/>
    <property type="project" value="UniProtKB"/>
</dbReference>
<dbReference type="GO" id="GO:0050660">
    <property type="term" value="F:flavin adenine dinucleotide binding"/>
    <property type="evidence" value="ECO:0000314"/>
    <property type="project" value="UniProtKB"/>
</dbReference>
<dbReference type="GO" id="GO:0042393">
    <property type="term" value="F:histone binding"/>
    <property type="evidence" value="ECO:0007669"/>
    <property type="project" value="Ensembl"/>
</dbReference>
<dbReference type="GO" id="GO:0032453">
    <property type="term" value="F:histone H3K4 demethylase activity"/>
    <property type="evidence" value="ECO:0000314"/>
    <property type="project" value="UniProtKB"/>
</dbReference>
<dbReference type="GO" id="GO:0008270">
    <property type="term" value="F:zinc ion binding"/>
    <property type="evidence" value="ECO:0000314"/>
    <property type="project" value="UniProtKB"/>
</dbReference>
<dbReference type="GO" id="GO:0044726">
    <property type="term" value="P:epigenetic programing of female pronucleus"/>
    <property type="evidence" value="ECO:0000315"/>
    <property type="project" value="MGI"/>
</dbReference>
<dbReference type="GO" id="GO:0071514">
    <property type="term" value="P:genomic imprinting"/>
    <property type="evidence" value="ECO:0000315"/>
    <property type="project" value="UniProtKB"/>
</dbReference>
<dbReference type="FunFam" id="3.30.40.100:FF:000002">
    <property type="entry name" value="Lysine-specific histone demethylase 1B"/>
    <property type="match status" value="1"/>
</dbReference>
<dbReference type="FunFam" id="1.10.10.10:FF:000232">
    <property type="entry name" value="lysine-specific histone demethylase 1B"/>
    <property type="match status" value="1"/>
</dbReference>
<dbReference type="Gene3D" id="3.30.40.100">
    <property type="match status" value="1"/>
</dbReference>
<dbReference type="Gene3D" id="3.90.660.10">
    <property type="match status" value="1"/>
</dbReference>
<dbReference type="Gene3D" id="3.50.50.60">
    <property type="entry name" value="FAD/NAD(P)-binding domain"/>
    <property type="match status" value="1"/>
</dbReference>
<dbReference type="Gene3D" id="1.10.10.10">
    <property type="entry name" value="Winged helix-like DNA-binding domain superfamily/Winged helix DNA-binding domain"/>
    <property type="match status" value="1"/>
</dbReference>
<dbReference type="InterPro" id="IPR002937">
    <property type="entry name" value="Amino_oxidase"/>
</dbReference>
<dbReference type="InterPro" id="IPR036188">
    <property type="entry name" value="FAD/NAD-bd_sf"/>
</dbReference>
<dbReference type="InterPro" id="IPR050281">
    <property type="entry name" value="Flavin_monoamine_oxidase"/>
</dbReference>
<dbReference type="InterPro" id="IPR009057">
    <property type="entry name" value="Homeodomain-like_sf"/>
</dbReference>
<dbReference type="InterPro" id="IPR007526">
    <property type="entry name" value="SWIRM"/>
</dbReference>
<dbReference type="InterPro" id="IPR036388">
    <property type="entry name" value="WH-like_DNA-bd_sf"/>
</dbReference>
<dbReference type="InterPro" id="IPR011124">
    <property type="entry name" value="Znf_CW"/>
</dbReference>
<dbReference type="PANTHER" id="PTHR10742">
    <property type="entry name" value="FLAVIN MONOAMINE OXIDASE"/>
    <property type="match status" value="1"/>
</dbReference>
<dbReference type="PANTHER" id="PTHR10742:SF410">
    <property type="entry name" value="LYSINE-SPECIFIC HISTONE DEMETHYLASE 2"/>
    <property type="match status" value="1"/>
</dbReference>
<dbReference type="Pfam" id="PF01593">
    <property type="entry name" value="Amino_oxidase"/>
    <property type="match status" value="1"/>
</dbReference>
<dbReference type="Pfam" id="PF04433">
    <property type="entry name" value="SWIRM"/>
    <property type="match status" value="1"/>
</dbReference>
<dbReference type="Pfam" id="PF07496">
    <property type="entry name" value="zf-CW"/>
    <property type="match status" value="1"/>
</dbReference>
<dbReference type="PRINTS" id="PR00419">
    <property type="entry name" value="ADXRDTASE"/>
</dbReference>
<dbReference type="SUPFAM" id="SSF54373">
    <property type="entry name" value="FAD-linked reductases, C-terminal domain"/>
    <property type="match status" value="1"/>
</dbReference>
<dbReference type="SUPFAM" id="SSF51905">
    <property type="entry name" value="FAD/NAD(P)-binding domain"/>
    <property type="match status" value="1"/>
</dbReference>
<dbReference type="SUPFAM" id="SSF46689">
    <property type="entry name" value="Homeodomain-like"/>
    <property type="match status" value="1"/>
</dbReference>
<dbReference type="PROSITE" id="PS50934">
    <property type="entry name" value="SWIRM"/>
    <property type="match status" value="1"/>
</dbReference>
<dbReference type="PROSITE" id="PS51050">
    <property type="entry name" value="ZF_CW"/>
    <property type="match status" value="1"/>
</dbReference>
<name>KDM1B_MOUSE</name>
<reference key="1">
    <citation type="journal article" date="2005" name="Science">
        <title>The transcriptional landscape of the mammalian genome.</title>
        <authorList>
            <person name="Carninci P."/>
            <person name="Kasukawa T."/>
            <person name="Katayama S."/>
            <person name="Gough J."/>
            <person name="Frith M.C."/>
            <person name="Maeda N."/>
            <person name="Oyama R."/>
            <person name="Ravasi T."/>
            <person name="Lenhard B."/>
            <person name="Wells C."/>
            <person name="Kodzius R."/>
            <person name="Shimokawa K."/>
            <person name="Bajic V.B."/>
            <person name="Brenner S.E."/>
            <person name="Batalov S."/>
            <person name="Forrest A.R."/>
            <person name="Zavolan M."/>
            <person name="Davis M.J."/>
            <person name="Wilming L.G."/>
            <person name="Aidinis V."/>
            <person name="Allen J.E."/>
            <person name="Ambesi-Impiombato A."/>
            <person name="Apweiler R."/>
            <person name="Aturaliya R.N."/>
            <person name="Bailey T.L."/>
            <person name="Bansal M."/>
            <person name="Baxter L."/>
            <person name="Beisel K.W."/>
            <person name="Bersano T."/>
            <person name="Bono H."/>
            <person name="Chalk A.M."/>
            <person name="Chiu K.P."/>
            <person name="Choudhary V."/>
            <person name="Christoffels A."/>
            <person name="Clutterbuck D.R."/>
            <person name="Crowe M.L."/>
            <person name="Dalla E."/>
            <person name="Dalrymple B.P."/>
            <person name="de Bono B."/>
            <person name="Della Gatta G."/>
            <person name="di Bernardo D."/>
            <person name="Down T."/>
            <person name="Engstrom P."/>
            <person name="Fagiolini M."/>
            <person name="Faulkner G."/>
            <person name="Fletcher C.F."/>
            <person name="Fukushima T."/>
            <person name="Furuno M."/>
            <person name="Futaki S."/>
            <person name="Gariboldi M."/>
            <person name="Georgii-Hemming P."/>
            <person name="Gingeras T.R."/>
            <person name="Gojobori T."/>
            <person name="Green R.E."/>
            <person name="Gustincich S."/>
            <person name="Harbers M."/>
            <person name="Hayashi Y."/>
            <person name="Hensch T.K."/>
            <person name="Hirokawa N."/>
            <person name="Hill D."/>
            <person name="Huminiecki L."/>
            <person name="Iacono M."/>
            <person name="Ikeo K."/>
            <person name="Iwama A."/>
            <person name="Ishikawa T."/>
            <person name="Jakt M."/>
            <person name="Kanapin A."/>
            <person name="Katoh M."/>
            <person name="Kawasawa Y."/>
            <person name="Kelso J."/>
            <person name="Kitamura H."/>
            <person name="Kitano H."/>
            <person name="Kollias G."/>
            <person name="Krishnan S.P."/>
            <person name="Kruger A."/>
            <person name="Kummerfeld S.K."/>
            <person name="Kurochkin I.V."/>
            <person name="Lareau L.F."/>
            <person name="Lazarevic D."/>
            <person name="Lipovich L."/>
            <person name="Liu J."/>
            <person name="Liuni S."/>
            <person name="McWilliam S."/>
            <person name="Madan Babu M."/>
            <person name="Madera M."/>
            <person name="Marchionni L."/>
            <person name="Matsuda H."/>
            <person name="Matsuzawa S."/>
            <person name="Miki H."/>
            <person name="Mignone F."/>
            <person name="Miyake S."/>
            <person name="Morris K."/>
            <person name="Mottagui-Tabar S."/>
            <person name="Mulder N."/>
            <person name="Nakano N."/>
            <person name="Nakauchi H."/>
            <person name="Ng P."/>
            <person name="Nilsson R."/>
            <person name="Nishiguchi S."/>
            <person name="Nishikawa S."/>
            <person name="Nori F."/>
            <person name="Ohara O."/>
            <person name="Okazaki Y."/>
            <person name="Orlando V."/>
            <person name="Pang K.C."/>
            <person name="Pavan W.J."/>
            <person name="Pavesi G."/>
            <person name="Pesole G."/>
            <person name="Petrovsky N."/>
            <person name="Piazza S."/>
            <person name="Reed J."/>
            <person name="Reid J.F."/>
            <person name="Ring B.Z."/>
            <person name="Ringwald M."/>
            <person name="Rost B."/>
            <person name="Ruan Y."/>
            <person name="Salzberg S.L."/>
            <person name="Sandelin A."/>
            <person name="Schneider C."/>
            <person name="Schoenbach C."/>
            <person name="Sekiguchi K."/>
            <person name="Semple C.A."/>
            <person name="Seno S."/>
            <person name="Sessa L."/>
            <person name="Sheng Y."/>
            <person name="Shibata Y."/>
            <person name="Shimada H."/>
            <person name="Shimada K."/>
            <person name="Silva D."/>
            <person name="Sinclair B."/>
            <person name="Sperling S."/>
            <person name="Stupka E."/>
            <person name="Sugiura K."/>
            <person name="Sultana R."/>
            <person name="Takenaka Y."/>
            <person name="Taki K."/>
            <person name="Tammoja K."/>
            <person name="Tan S.L."/>
            <person name="Tang S."/>
            <person name="Taylor M.S."/>
            <person name="Tegner J."/>
            <person name="Teichmann S.A."/>
            <person name="Ueda H.R."/>
            <person name="van Nimwegen E."/>
            <person name="Verardo R."/>
            <person name="Wei C.L."/>
            <person name="Yagi K."/>
            <person name="Yamanishi H."/>
            <person name="Zabarovsky E."/>
            <person name="Zhu S."/>
            <person name="Zimmer A."/>
            <person name="Hide W."/>
            <person name="Bult C."/>
            <person name="Grimmond S.M."/>
            <person name="Teasdale R.D."/>
            <person name="Liu E.T."/>
            <person name="Brusic V."/>
            <person name="Quackenbush J."/>
            <person name="Wahlestedt C."/>
            <person name="Mattick J.S."/>
            <person name="Hume D.A."/>
            <person name="Kai C."/>
            <person name="Sasaki D."/>
            <person name="Tomaru Y."/>
            <person name="Fukuda S."/>
            <person name="Kanamori-Katayama M."/>
            <person name="Suzuki M."/>
            <person name="Aoki J."/>
            <person name="Arakawa T."/>
            <person name="Iida J."/>
            <person name="Imamura K."/>
            <person name="Itoh M."/>
            <person name="Kato T."/>
            <person name="Kawaji H."/>
            <person name="Kawagashira N."/>
            <person name="Kawashima T."/>
            <person name="Kojima M."/>
            <person name="Kondo S."/>
            <person name="Konno H."/>
            <person name="Nakano K."/>
            <person name="Ninomiya N."/>
            <person name="Nishio T."/>
            <person name="Okada M."/>
            <person name="Plessy C."/>
            <person name="Shibata K."/>
            <person name="Shiraki T."/>
            <person name="Suzuki S."/>
            <person name="Tagami M."/>
            <person name="Waki K."/>
            <person name="Watahiki A."/>
            <person name="Okamura-Oho Y."/>
            <person name="Suzuki H."/>
            <person name="Kawai J."/>
            <person name="Hayashizaki Y."/>
        </authorList>
    </citation>
    <scope>NUCLEOTIDE SEQUENCE [LARGE SCALE MRNA] (ISOFORM 3)</scope>
    <scope>NUCLEOTIDE SEQUENCE [LARGE SCALE MRNA] OF 285-826 (ISOFORM 2)</scope>
    <source>
        <strain>C57BL/6J</strain>
        <tissue>Cecum</tissue>
        <tissue>Skin</tissue>
    </source>
</reference>
<reference key="2">
    <citation type="journal article" date="2004" name="Genome Res.">
        <title>The status, quality, and expansion of the NIH full-length cDNA project: the Mammalian Gene Collection (MGC).</title>
        <authorList>
            <consortium name="The MGC Project Team"/>
        </authorList>
    </citation>
    <scope>NUCLEOTIDE SEQUENCE [LARGE SCALE MRNA] (ISOFORM 1)</scope>
    <source>
        <strain>FVB/N</strain>
        <tissue>Mammary tumor</tissue>
    </source>
</reference>
<reference key="3">
    <citation type="journal article" date="2009" name="J. Biol. Chem.">
        <title>A novel mammalian flavin-dependent histone demethylase.</title>
        <authorList>
            <person name="Karytinos A."/>
            <person name="Forneris F."/>
            <person name="Profumo A."/>
            <person name="Ciossani G."/>
            <person name="Battaglioli E."/>
            <person name="Binda C."/>
            <person name="Mattevi A."/>
        </authorList>
    </citation>
    <scope>FUNCTION</scope>
    <scope>BIOPHYSICOCHEMICAL PROPERTIES</scope>
    <scope>COFACTOR</scope>
    <scope>ACTIVITY REGULATION</scope>
</reference>
<reference key="4">
    <citation type="journal article" date="2009" name="Nature">
        <title>KDM1B is a histone H3K4 demethylase required to establish maternal genomic imprints.</title>
        <authorList>
            <person name="Ciccone D.N."/>
            <person name="Su H."/>
            <person name="Hevi S."/>
            <person name="Gay F."/>
            <person name="Lei H."/>
            <person name="Bajko J."/>
            <person name="Xu G."/>
            <person name="Li E."/>
            <person name="Chen T."/>
        </authorList>
    </citation>
    <scope>FUNCTION</scope>
    <scope>MUTAGENESIS OF LYS-667</scope>
    <scope>SUBCELLULAR LOCATION</scope>
    <scope>TISSUE SPECIFICITY</scope>
    <scope>DISRUPTION PHENOTYPE</scope>
</reference>
<reference key="5">
    <citation type="journal article" date="2010" name="Cell">
        <title>A tissue-specific atlas of mouse protein phosphorylation and expression.</title>
        <authorList>
            <person name="Huttlin E.L."/>
            <person name="Jedrychowski M.P."/>
            <person name="Elias J.E."/>
            <person name="Goswami T."/>
            <person name="Rad R."/>
            <person name="Beausoleil S.A."/>
            <person name="Villen J."/>
            <person name="Haas W."/>
            <person name="Sowa M.E."/>
            <person name="Gygi S.P."/>
        </authorList>
    </citation>
    <scope>PHOSPHORYLATION [LARGE SCALE ANALYSIS] AT SER-17 AND SER-253</scope>
    <scope>IDENTIFICATION BY MASS SPECTROMETRY [LARGE SCALE ANALYSIS]</scope>
    <source>
        <tissue>Kidney</tissue>
        <tissue>Pancreas</tissue>
        <tissue>Spleen</tissue>
    </source>
</reference>
<sequence>MAASRGRSKKRSNLELSPDNLPLRSSGRQAKKKAVEIPDEDEDGSSEKKYRKCEKAGCTAAYPVCFASASERCAKNGYTSRWYHLSCGEHFCNECFDHYYRSHKDGYDKYSAWKRVWTSNGKTEPSPKAFMADQQLPYWVQCTKPECGKWRQLTKEIQLTPHMARTYRCGMKPNTITKPDTPDHCSFPEDLRVLEVSNHWWYPMLIQPPLLKDSVAAPLLSAYYPDCVGMSPSCTSTHRATVTAATTTTGSASPGEMEPSKAAPSSLVLGMNRYFQPFYQPNECGKALCVRPDVMELDELYEFPEYSRDPTMYLALRNLILALWYTNCKEALTPQKCIPHIIVRGLVRIRCVQEVERILYFMTRKGLINTGVLTVAAGQHLLPKHYHNKSVLVVGAGPAGLAAARQLHNFGMKVTVLEAKDRIGGRVWDDKSFKGVVVGRGPQIVNGCINNPVALMCEQLGISMRKLGERCDLIQEGGRITDPTVDKRMDFHFNALLDVVSEWRKDKTLLQDVPLGEKIEEIYRAFVKESGIQFSELEGQVLQFHLSNLEYACGSSLHQVSARSWDHNEFFAQFAGDHTLLTPGYSTIIEKLAEGLDIRLKSPVQSIDYTGDEVQVTTTDGMGHSAQKVLVTVPLAILQRGAIQFNPPLSEKKMKAINSLGAGIIEKIALQFPYRFWDSKVQGADFFGHVPPSASQRGLFAVFYDMDSQQSVLMSVITGEAVASLRTMDDKQVLQQCMGILRELFKEQEIPEPTKYFVTRWSTEPWIQMAYSFVKTFGSGEAYDIIAEEIQGTVFFAGEATNRHFPQTVTGAYLSGVREASKIAAF</sequence>
<organism>
    <name type="scientific">Mus musculus</name>
    <name type="common">Mouse</name>
    <dbReference type="NCBI Taxonomy" id="10090"/>
    <lineage>
        <taxon>Eukaryota</taxon>
        <taxon>Metazoa</taxon>
        <taxon>Chordata</taxon>
        <taxon>Craniata</taxon>
        <taxon>Vertebrata</taxon>
        <taxon>Euteleostomi</taxon>
        <taxon>Mammalia</taxon>
        <taxon>Eutheria</taxon>
        <taxon>Euarchontoglires</taxon>
        <taxon>Glires</taxon>
        <taxon>Rodentia</taxon>
        <taxon>Myomorpha</taxon>
        <taxon>Muroidea</taxon>
        <taxon>Muridae</taxon>
        <taxon>Murinae</taxon>
        <taxon>Mus</taxon>
        <taxon>Mus</taxon>
    </lineage>
</organism>
<protein>
    <recommendedName>
        <fullName>Lysine-specific histone demethylase 1B</fullName>
        <ecNumber evidence="1">1.14.99.66</ecNumber>
    </recommendedName>
    <alternativeName>
        <fullName>Flavin-containing amine oxidase domain-containing protein 1</fullName>
    </alternativeName>
    <alternativeName>
        <fullName>Lysine-specific histone demethylase 2</fullName>
    </alternativeName>
</protein>
<feature type="chain" id="PRO_0000247337" description="Lysine-specific histone demethylase 1B">
    <location>
        <begin position="1"/>
        <end position="826"/>
    </location>
</feature>
<feature type="domain" description="SWIRM" evidence="3">
    <location>
        <begin position="281"/>
        <end position="379"/>
    </location>
</feature>
<feature type="zinc finger region" description="CW-type" evidence="4">
    <location>
        <begin position="133"/>
        <end position="193"/>
    </location>
</feature>
<feature type="region of interest" description="Disordered" evidence="5">
    <location>
        <begin position="1"/>
        <end position="46"/>
    </location>
</feature>
<feature type="region of interest" description="GLYR1-binding" evidence="1">
    <location>
        <begin position="279"/>
        <end position="298"/>
    </location>
</feature>
<feature type="region of interest" description="Histone H3-binding" evidence="1">
    <location>
        <begin position="444"/>
        <end position="473"/>
    </location>
</feature>
<feature type="region of interest" description="Histone H3-binding" evidence="1">
    <location>
        <begin position="493"/>
        <end position="504"/>
    </location>
</feature>
<feature type="region of interest" description="Histone H3-binding" evidence="1">
    <location>
        <begin position="544"/>
        <end position="578"/>
    </location>
</feature>
<feature type="region of interest" description="GLYR1-binding" evidence="1">
    <location>
        <begin position="570"/>
        <end position="572"/>
    </location>
</feature>
<feature type="region of interest" description="GLYR1-binding" evidence="1">
    <location>
        <begin position="802"/>
        <end position="818"/>
    </location>
</feature>
<feature type="compositionally biased region" description="Basic residues" evidence="5">
    <location>
        <begin position="1"/>
        <end position="11"/>
    </location>
</feature>
<feature type="binding site" evidence="1">
    <location>
        <position position="53"/>
    </location>
    <ligand>
        <name>Zn(2+)</name>
        <dbReference type="ChEBI" id="CHEBI:29105"/>
        <label>1</label>
    </ligand>
</feature>
<feature type="binding site" evidence="1">
    <location>
        <position position="58"/>
    </location>
    <ligand>
        <name>Zn(2+)</name>
        <dbReference type="ChEBI" id="CHEBI:29105"/>
        <label>1</label>
    </ligand>
</feature>
<feature type="binding site" evidence="1">
    <location>
        <position position="65"/>
    </location>
    <ligand>
        <name>Zn(2+)</name>
        <dbReference type="ChEBI" id="CHEBI:29105"/>
        <label>2</label>
    </ligand>
</feature>
<feature type="binding site" evidence="1">
    <location>
        <position position="73"/>
    </location>
    <ligand>
        <name>Zn(2+)</name>
        <dbReference type="ChEBI" id="CHEBI:29105"/>
        <label>2</label>
    </ligand>
</feature>
<feature type="binding site" evidence="1">
    <location>
        <position position="84"/>
    </location>
    <ligand>
        <name>Zn(2+)</name>
        <dbReference type="ChEBI" id="CHEBI:29105"/>
        <label>1</label>
    </ligand>
</feature>
<feature type="binding site" evidence="1">
    <location>
        <position position="90"/>
    </location>
    <ligand>
        <name>Zn(2+)</name>
        <dbReference type="ChEBI" id="CHEBI:29105"/>
        <label>1</label>
    </ligand>
</feature>
<feature type="binding site" evidence="1">
    <location>
        <position position="92"/>
    </location>
    <ligand>
        <name>Zn(2+)</name>
        <dbReference type="ChEBI" id="CHEBI:29105"/>
        <label>2</label>
    </ligand>
</feature>
<feature type="binding site" evidence="1">
    <location>
        <position position="95"/>
    </location>
    <ligand>
        <name>Zn(2+)</name>
        <dbReference type="ChEBI" id="CHEBI:29105"/>
        <label>2</label>
    </ligand>
</feature>
<feature type="binding site" evidence="4">
    <location>
        <position position="142"/>
    </location>
    <ligand>
        <name>Zn(2+)</name>
        <dbReference type="ChEBI" id="CHEBI:29105"/>
        <label>3</label>
    </ligand>
</feature>
<feature type="binding site" evidence="4">
    <location>
        <position position="147"/>
    </location>
    <ligand>
        <name>Zn(2+)</name>
        <dbReference type="ChEBI" id="CHEBI:29105"/>
        <label>3</label>
    </ligand>
</feature>
<feature type="binding site" evidence="4">
    <location>
        <position position="169"/>
    </location>
    <ligand>
        <name>Zn(2+)</name>
        <dbReference type="ChEBI" id="CHEBI:29105"/>
        <label>3</label>
    </ligand>
</feature>
<feature type="binding site" evidence="4">
    <location>
        <position position="185"/>
    </location>
    <ligand>
        <name>Zn(2+)</name>
        <dbReference type="ChEBI" id="CHEBI:29105"/>
        <label>3</label>
    </ligand>
</feature>
<feature type="binding site" evidence="1 2">
    <location>
        <begin position="389"/>
        <end position="445"/>
    </location>
    <ligand>
        <name>FAD</name>
        <dbReference type="ChEBI" id="CHEBI:57692"/>
    </ligand>
</feature>
<feature type="binding site" evidence="1">
    <location>
        <position position="604"/>
    </location>
    <ligand>
        <name>FAD</name>
        <dbReference type="ChEBI" id="CHEBI:57692"/>
    </ligand>
</feature>
<feature type="binding site" evidence="1">
    <location>
        <position position="799"/>
    </location>
    <ligand>
        <name>FAD</name>
        <dbReference type="ChEBI" id="CHEBI:57692"/>
    </ligand>
</feature>
<feature type="binding site" evidence="1">
    <location>
        <begin position="807"/>
        <end position="809"/>
    </location>
    <ligand>
        <name>FAD</name>
        <dbReference type="ChEBI" id="CHEBI:57692"/>
    </ligand>
</feature>
<feature type="modified residue" description="Phosphoserine" evidence="11">
    <location>
        <position position="17"/>
    </location>
</feature>
<feature type="modified residue" description="Phosphoserine" evidence="1">
    <location>
        <position position="26"/>
    </location>
</feature>
<feature type="modified residue" description="Phosphoserine" evidence="11">
    <location>
        <position position="253"/>
    </location>
</feature>
<feature type="splice variant" id="VSP_019968" description="In isoform 3." evidence="8">
    <location>
        <begin position="1"/>
        <end position="621"/>
    </location>
</feature>
<feature type="splice variant" id="VSP_019969" description="In isoform 2." evidence="8">
    <location>
        <begin position="459"/>
        <end position="558"/>
    </location>
</feature>
<feature type="mutagenesis site" description="Loss of activity." evidence="7">
    <original>K</original>
    <variation>A</variation>
    <location>
        <position position="667"/>
    </location>
</feature>
<keyword id="KW-0025">Alternative splicing</keyword>
<keyword id="KW-0156">Chromatin regulator</keyword>
<keyword id="KW-0158">Chromosome</keyword>
<keyword id="KW-0217">Developmental protein</keyword>
<keyword id="KW-0274">FAD</keyword>
<keyword id="KW-0285">Flavoprotein</keyword>
<keyword id="KW-0479">Metal-binding</keyword>
<keyword id="KW-0539">Nucleus</keyword>
<keyword id="KW-0560">Oxidoreductase</keyword>
<keyword id="KW-0597">Phosphoprotein</keyword>
<keyword id="KW-1185">Reference proteome</keyword>
<keyword id="KW-0678">Repressor</keyword>
<keyword id="KW-0804">Transcription</keyword>
<keyword id="KW-0805">Transcription regulation</keyword>
<keyword id="KW-0862">Zinc</keyword>
<keyword id="KW-0863">Zinc-finger</keyword>
<accession>Q8CIG3</accession>
<accession>Q8C5C4</accession>
<accession>Q8CEC1</accession>
<proteinExistence type="evidence at protein level"/>
<gene>
    <name evidence="10" type="primary">Kdm1b</name>
    <name type="synonym">Aof1</name>
    <name type="synonym">Lsd2</name>
</gene>
<comment type="function">
    <text evidence="6 7">Histone demethylase that demethylates 'Lys-4' of histone H3, a specific tag for epigenetic transcriptional activation, thereby acting as a corepressor. Required for de novo DNA methylation of a subset of imprinted genes during oogenesis. Acts by oxidizing the substrate by FAD to generate the corresponding imine that is subsequently hydrolyzed. Demethylates both mono- and di-methylated 'Lys-4' of histone H3. Has no effect on tri-methylated 'Lys-4', mono-, di- or tri-methylated 'Lys-9', mono-, di- or tri-methylated 'Lys-27', mono-, di- or tri-methylated 'Lys-36' of histone H3, or on mono-, di- or tri-methylated 'Lys-20' of histone H4.</text>
</comment>
<comment type="function">
    <text evidence="1 6 7">Histone demethylase that demethylates 'Lys-4' of histone H3, a specific tag for epigenetic transcriptional activation, thereby acting as a corepressor. Required for de novo DNA methylation of a subset of imprinted genes during oogenesis. Acts by oxidizing the substrate by FAD to generate the corresponding imine that is subsequently hydrolyzed. Demethylates both mono- and di-methylated 'Lys-4' of histone H3. Has no effect on tri-methylated 'Lys-4', mono-, di- or tri-methylated 'Lys-9', mono-, di- or tri-methylated 'Lys-27', mono-, di- or tri-methylated 'Lys-36' of histone H3, or on mono-, di- or tri-methylated 'Lys-20' of histone H4 (PubMed:19407342, PubMed:19727073). Alone, it is unable to demethylate H3K4me on nucleosomes and requires the presence of GLYR1 to achieve such activity, they form a multifunctional enzyme complex that modifies transcribed chromatin and facilitates Pol II transcription through nucleosomes (By similarity).</text>
</comment>
<comment type="catalytic activity">
    <reaction evidence="1">
        <text>N(6),N(6)-dimethyl-L-lysyl(4)-[histone H3] + 2 A + 2 H2O = L-lysyl(4)-[histone H3] + 2 formaldehyde + 2 AH2</text>
        <dbReference type="Rhea" id="RHEA:60244"/>
        <dbReference type="Rhea" id="RHEA-COMP:15540"/>
        <dbReference type="Rhea" id="RHEA-COMP:15547"/>
        <dbReference type="ChEBI" id="CHEBI:13193"/>
        <dbReference type="ChEBI" id="CHEBI:15377"/>
        <dbReference type="ChEBI" id="CHEBI:16842"/>
        <dbReference type="ChEBI" id="CHEBI:17499"/>
        <dbReference type="ChEBI" id="CHEBI:29969"/>
        <dbReference type="ChEBI" id="CHEBI:61976"/>
        <dbReference type="EC" id="1.14.99.66"/>
    </reaction>
    <physiologicalReaction direction="left-to-right" evidence="1">
        <dbReference type="Rhea" id="RHEA:60245"/>
    </physiologicalReaction>
</comment>
<comment type="catalytic activity">
    <reaction evidence="1">
        <text>N(6)-methyl-L-lysyl(4)-[histone H3] + A + H2O = L-lysyl(4)-[histone H3] + formaldehyde + AH2</text>
        <dbReference type="Rhea" id="RHEA:60256"/>
        <dbReference type="Rhea" id="RHEA-COMP:15543"/>
        <dbReference type="Rhea" id="RHEA-COMP:15547"/>
        <dbReference type="ChEBI" id="CHEBI:13193"/>
        <dbReference type="ChEBI" id="CHEBI:15377"/>
        <dbReference type="ChEBI" id="CHEBI:16842"/>
        <dbReference type="ChEBI" id="CHEBI:17499"/>
        <dbReference type="ChEBI" id="CHEBI:29969"/>
        <dbReference type="ChEBI" id="CHEBI:61929"/>
    </reaction>
    <physiologicalReaction direction="left-to-right" evidence="1">
        <dbReference type="Rhea" id="RHEA:60257"/>
    </physiologicalReaction>
</comment>
<comment type="cofactor">
    <cofactor evidence="6">
        <name>FAD</name>
        <dbReference type="ChEBI" id="CHEBI:57692"/>
    </cofactor>
</comment>
<comment type="cofactor">
    <cofactor evidence="1">
        <name>Zn(2+)</name>
        <dbReference type="ChEBI" id="CHEBI:29105"/>
    </cofactor>
    <text evidence="1">Binds 3 Zn(2+) ions per subunit.</text>
</comment>
<comment type="activity regulation">
    <text evidence="1 6">Inhibited by tranylcypromine, but not by pargyline, deprenyl or rasagiline (PubMed:19407342). Histone H3K4me1 and H3K4me2 demethylase activity is inhibited by DNA, this inhibition is released in complex with GLYR1 (By similarity).</text>
</comment>
<comment type="biophysicochemical properties">
    <kinetics>
        <KM evidence="6">9.2 uM for mono-methylated 'Lys-4' histone H3 N-terminal peptide</KM>
        <KM evidence="6">11.3 uM for di-methylated 'Lys-4' histone H3 N-terminal peptide</KM>
        <KM evidence="6">9 uM for mono-methylated 'Lys-4', mono-methylated 'Lys-9' histone H3 N-terminal peptide</KM>
        <KM evidence="6">6.6 uM for di-methylated 'Lys-4', di-methylated 'Lys-9' histone H3 N-terminal peptide</KM>
        <KM evidence="6">70.5 uM for mono-methylated 'Lys-4', acetylated 'Lys-9' histone H3 N-terminal peptide</KM>
        <KM evidence="6">8.1 uM for mono-methylated 'Lys-4', mono-methylated 'Arg-17' histone H3 N-terminal peptide</KM>
    </kinetics>
    <phDependence>
        <text evidence="6">Optimum pH is 8.5.</text>
    </phDependence>
</comment>
<comment type="subunit">
    <text evidence="1">Interacts with its cofactor GLYR1 at nucleosomes; this interaction stimulates H3K4me1 and H3K4me2 demethylation. In contrast to KDM1A, does not form a complex with RCOR1/CoREST. Possible accessory component of the polycomb repressive deubiquitinase (PR-DUB) complex, at least composed of BAP1, one of ASXL1, ASXL2 or (probably) ASXL3 and one of MBD5 or MBD6. The PR-DUB core associates with a number of accessory proteins, including FOXK1, FOXK2, KDM1B, HCFC1 and OGT; KDM1B specifically associates with ASXL2 PR-DUB complexes.</text>
</comment>
<comment type="subcellular location">
    <subcellularLocation>
        <location evidence="7">Nucleus</location>
    </subcellularLocation>
    <subcellularLocation>
        <location evidence="1">Chromosome</location>
    </subcellularLocation>
    <text evidence="1">Found in actively RNAPolII-transcribed gene bodies.</text>
</comment>
<comment type="alternative products">
    <event type="alternative splicing"/>
    <isoform>
        <id>Q8CIG3-1</id>
        <name>1</name>
        <sequence type="displayed"/>
    </isoform>
    <isoform>
        <id>Q8CIG3-2</id>
        <name>2</name>
        <sequence type="described" ref="VSP_019969"/>
    </isoform>
    <isoform>
        <id>Q8CIG3-3</id>
        <name>3</name>
        <sequence type="described" ref="VSP_019968"/>
    </isoform>
</comment>
<comment type="tissue specificity">
    <text evidence="7">Expressed in growing oocytes and in intestinal gland.</text>
</comment>
<comment type="disruption phenotype">
    <text evidence="7">No effect on mouse development and oogenesis, but embryos derived from oocytes from Kdm1b-deficient females die before mid-gestation.</text>
</comment>
<comment type="miscellaneous">
    <text evidence="6">Histone H3 acetylation of 'Lys-9' decreases the binding of the substrate, while hyperacetylation of 'Lys-9', 'Lys-14' and 'Lys-18', phosphorylation of 'Thr3' or 'Ser-10', and methylation of 'Arg-2' or 'Arg-8' abolishes its binding. Methylation of 'Lys-9' and 'Arg-17' are the only two epigenetic modifications that have no significant effect on catalysis.</text>
</comment>
<comment type="similarity">
    <text evidence="9">Belongs to the flavin monoamine oxidase family.</text>
</comment>
<comment type="sequence caution" evidence="9">
    <conflict type="erroneous initiation">
        <sequence resource="EMBL-CDS" id="BAC26005"/>
    </conflict>
    <text>Truncated N-terminus.</text>
</comment>
<comment type="sequence caution" evidence="9">
    <conflict type="frameshift">
        <sequence resource="EMBL-CDS" id="BAC37460"/>
    </conflict>
</comment>